<feature type="chain" id="PRO_0000215110" description="RNA-splicing ligase RtcB">
    <location>
        <begin position="1"/>
        <end position="432"/>
    </location>
</feature>
<feature type="active site" description="GMP-histidine intermediate" evidence="1">
    <location>
        <position position="355"/>
    </location>
</feature>
<feature type="binding site" evidence="1">
    <location>
        <position position="52"/>
    </location>
    <ligand>
        <name>Mn(2+)</name>
        <dbReference type="ChEBI" id="CHEBI:29035"/>
        <label>1</label>
    </ligand>
</feature>
<feature type="binding site" evidence="1">
    <location>
        <position position="55"/>
    </location>
    <ligand>
        <name>Mn(2+)</name>
        <dbReference type="ChEBI" id="CHEBI:29035"/>
        <label>1</label>
    </ligand>
</feature>
<feature type="binding site" evidence="1">
    <location>
        <position position="55"/>
    </location>
    <ligand>
        <name>Mn(2+)</name>
        <dbReference type="ChEBI" id="CHEBI:29035"/>
        <label>2</label>
    </ligand>
</feature>
<feature type="binding site" evidence="1">
    <location>
        <begin position="161"/>
        <end position="165"/>
    </location>
    <ligand>
        <name>GMP</name>
        <dbReference type="ChEBI" id="CHEBI:58115"/>
    </ligand>
</feature>
<feature type="binding site" evidence="1">
    <location>
        <position position="162"/>
    </location>
    <ligand>
        <name>Mn(2+)</name>
        <dbReference type="ChEBI" id="CHEBI:29035"/>
        <label>1</label>
    </ligand>
</feature>
<feature type="binding site" evidence="1">
    <location>
        <position position="193"/>
    </location>
    <ligand>
        <name>Mn(2+)</name>
        <dbReference type="ChEBI" id="CHEBI:29035"/>
        <label>2</label>
    </ligand>
</feature>
<feature type="binding site" evidence="1">
    <location>
        <begin position="282"/>
        <end position="283"/>
    </location>
    <ligand>
        <name>GMP</name>
        <dbReference type="ChEBI" id="CHEBI:58115"/>
    </ligand>
</feature>
<feature type="binding site" evidence="1">
    <location>
        <position position="282"/>
    </location>
    <ligand>
        <name>Mn(2+)</name>
        <dbReference type="ChEBI" id="CHEBI:29035"/>
        <label>2</label>
    </ligand>
</feature>
<feature type="binding site" evidence="1">
    <location>
        <begin position="331"/>
        <end position="334"/>
    </location>
    <ligand>
        <name>GMP</name>
        <dbReference type="ChEBI" id="CHEBI:58115"/>
    </ligand>
</feature>
<feature type="binding site" evidence="1">
    <location>
        <position position="338"/>
    </location>
    <ligand>
        <name>GMP</name>
        <dbReference type="ChEBI" id="CHEBI:58115"/>
    </ligand>
</feature>
<feature type="binding site" evidence="1">
    <location>
        <begin position="355"/>
        <end position="358"/>
    </location>
    <ligand>
        <name>GMP</name>
        <dbReference type="ChEBI" id="CHEBI:58115"/>
    </ligand>
</feature>
<feature type="binding site" evidence="1">
    <location>
        <position position="431"/>
    </location>
    <ligand>
        <name>GMP</name>
        <dbReference type="ChEBI" id="CHEBI:58115"/>
    </ligand>
</feature>
<keyword id="KW-0342">GTP-binding</keyword>
<keyword id="KW-0436">Ligase</keyword>
<keyword id="KW-0464">Manganese</keyword>
<keyword id="KW-0479">Metal-binding</keyword>
<keyword id="KW-0547">Nucleotide-binding</keyword>
<keyword id="KW-1185">Reference proteome</keyword>
<keyword id="KW-0692">RNA repair</keyword>
<organism>
    <name type="scientific">Mycobacterium bovis (strain ATCC BAA-935 / AF2122/97)</name>
    <dbReference type="NCBI Taxonomy" id="233413"/>
    <lineage>
        <taxon>Bacteria</taxon>
        <taxon>Bacillati</taxon>
        <taxon>Actinomycetota</taxon>
        <taxon>Actinomycetes</taxon>
        <taxon>Mycobacteriales</taxon>
        <taxon>Mycobacteriaceae</taxon>
        <taxon>Mycobacterium</taxon>
        <taxon>Mycobacterium tuberculosis complex</taxon>
    </lineage>
</organism>
<reference key="1">
    <citation type="journal article" date="2003" name="Proc. Natl. Acad. Sci. U.S.A.">
        <title>The complete genome sequence of Mycobacterium bovis.</title>
        <authorList>
            <person name="Garnier T."/>
            <person name="Eiglmeier K."/>
            <person name="Camus J.-C."/>
            <person name="Medina N."/>
            <person name="Mansoor H."/>
            <person name="Pryor M."/>
            <person name="Duthoy S."/>
            <person name="Grondin S."/>
            <person name="Lacroix C."/>
            <person name="Monsempe C."/>
            <person name="Simon S."/>
            <person name="Harris B."/>
            <person name="Atkin R."/>
            <person name="Doggett J."/>
            <person name="Mayes R."/>
            <person name="Keating L."/>
            <person name="Wheeler P.R."/>
            <person name="Parkhill J."/>
            <person name="Barrell B.G."/>
            <person name="Cole S.T."/>
            <person name="Gordon S.V."/>
            <person name="Hewinson R.G."/>
        </authorList>
    </citation>
    <scope>NUCLEOTIDE SEQUENCE [LARGE SCALE GENOMIC DNA]</scope>
    <source>
        <strain>ATCC BAA-935 / AF2122/97</strain>
    </source>
</reference>
<reference key="2">
    <citation type="journal article" date="2017" name="Genome Announc.">
        <title>Updated reference genome sequence and annotation of Mycobacterium bovis AF2122/97.</title>
        <authorList>
            <person name="Malone K.M."/>
            <person name="Farrell D."/>
            <person name="Stuber T.P."/>
            <person name="Schubert O.T."/>
            <person name="Aebersold R."/>
            <person name="Robbe-Austerman S."/>
            <person name="Gordon S.V."/>
        </authorList>
    </citation>
    <scope>NUCLEOTIDE SEQUENCE [LARGE SCALE GENOMIC DNA]</scope>
    <scope>GENOME REANNOTATION</scope>
    <source>
        <strain>ATCC BAA-935 / AF2122/97</strain>
    </source>
</reference>
<gene>
    <name type="primary">rtcB</name>
    <name type="ordered locus">BQ2027_MB2664</name>
</gene>
<comment type="function">
    <text evidence="2">GTP-dependent RNA ligase that is involved in RNA repair. Joins RNA with 2',3'-cyclic-phosphate or 3'-phosphate ends to RNA with 5'-hydroxy ends.</text>
</comment>
<comment type="catalytic activity">
    <reaction evidence="2">
        <text>a 3'-end 3'-phospho-ribonucleotide-RNA + a 5'-end dephospho-ribonucleoside-RNA + GTP = a ribonucleotidyl-ribonucleotide-RNA + GMP + diphosphate</text>
        <dbReference type="Rhea" id="RHEA:68076"/>
        <dbReference type="Rhea" id="RHEA-COMP:10463"/>
        <dbReference type="Rhea" id="RHEA-COMP:13936"/>
        <dbReference type="Rhea" id="RHEA-COMP:17355"/>
        <dbReference type="ChEBI" id="CHEBI:33019"/>
        <dbReference type="ChEBI" id="CHEBI:37565"/>
        <dbReference type="ChEBI" id="CHEBI:58115"/>
        <dbReference type="ChEBI" id="CHEBI:83062"/>
        <dbReference type="ChEBI" id="CHEBI:138284"/>
        <dbReference type="ChEBI" id="CHEBI:173118"/>
        <dbReference type="EC" id="6.5.1.8"/>
    </reaction>
</comment>
<comment type="catalytic activity">
    <reaction evidence="2">
        <text>a 3'-end 2',3'-cyclophospho-ribonucleotide-RNA + a 5'-end dephospho-ribonucleoside-RNA + GTP + H2O = a ribonucleotidyl-ribonucleotide-RNA + GMP + diphosphate + H(+)</text>
        <dbReference type="Rhea" id="RHEA:68080"/>
        <dbReference type="Rhea" id="RHEA-COMP:10464"/>
        <dbReference type="Rhea" id="RHEA-COMP:13936"/>
        <dbReference type="Rhea" id="RHEA-COMP:17355"/>
        <dbReference type="ChEBI" id="CHEBI:15377"/>
        <dbReference type="ChEBI" id="CHEBI:15378"/>
        <dbReference type="ChEBI" id="CHEBI:33019"/>
        <dbReference type="ChEBI" id="CHEBI:37565"/>
        <dbReference type="ChEBI" id="CHEBI:58115"/>
        <dbReference type="ChEBI" id="CHEBI:83064"/>
        <dbReference type="ChEBI" id="CHEBI:138284"/>
        <dbReference type="ChEBI" id="CHEBI:173118"/>
        <dbReference type="EC" id="6.5.1.8"/>
    </reaction>
</comment>
<comment type="cofactor">
    <cofactor evidence="1">
        <name>Mn(2+)</name>
        <dbReference type="ChEBI" id="CHEBI:29035"/>
    </cofactor>
    <text evidence="1">Binds 2 manganese ions per subunit.</text>
</comment>
<comment type="subunit">
    <text evidence="2">Monomer.</text>
</comment>
<comment type="miscellaneous">
    <text evidence="2">Ligation proceeds through 3 nucleotidyl transfer steps, with 2',3'-cyclic phosphate termini being hydrolyzed to 3'-P termini in a step that precedes 3'-P activation with GMP. In the first nucleotidyl transfer step, RtcB reacts with GTP to form a covalent RtcB-histidine-GMP intermediate with release of PPi; in the second step, the GMP moiety is transferred to the RNA 3'-P; in the third step, the 5'-OH from the opposite RNA strand attacks the activated 3'-P to form a 3',5'-phosphodiester bond and release GMP.</text>
</comment>
<comment type="similarity">
    <text evidence="3">Belongs to the RtcB family.</text>
</comment>
<evidence type="ECO:0000250" key="1">
    <source>
        <dbReference type="UniProtKB" id="O59245"/>
    </source>
</evidence>
<evidence type="ECO:0000250" key="2">
    <source>
        <dbReference type="UniProtKB" id="P46850"/>
    </source>
</evidence>
<evidence type="ECO:0000305" key="3"/>
<proteinExistence type="inferred from homology"/>
<sequence>MQVVNVATLPGIVRASYAMPDVHWGYGFPIGGVAATDVDNDGVVSPGGVGFDISCGVRLLVGEGLDREELQPRLPAVMDRLDRAIPRGVGTAGVWRLPDRNTLQEVLTGGARFAVEQGHGVALDLERCEDGGVMTGADAAKISDRALQRGLGQIGSLGSGNHFLEVQAVDRVYDPVAAAPMGLAEGTVCVMIHTGSRGLGHQICTDHVRQMEQAMGRYGIAVPDRQLACVPVHSPDGQAYLAAMAAAANYGRANRQLLTEATRRVFADATGTPLDLLYDVSHNLAKIETHPIDGQLRSVCVHRKGATRSLPPHHHELPAELAAVGQPVLIPGTMGTASYVLAGVTGNPAFFSTAHGAGRVLSRHQAARHTSGEAIRASLAKRGIIVRGTSRRGIAEEKPEAYKDVDEVIEASHQSGLARKVARLVPLGCVKG</sequence>
<protein>
    <recommendedName>
        <fullName evidence="2">RNA-splicing ligase RtcB</fullName>
        <ecNumber evidence="2">6.5.1.8</ecNumber>
    </recommendedName>
    <alternativeName>
        <fullName evidence="2">3'-phosphate/5'-hydroxy nucleic acid ligase</fullName>
    </alternativeName>
</protein>
<name>RTCB_MYCBO</name>
<dbReference type="EC" id="6.5.1.8" evidence="2"/>
<dbReference type="EMBL" id="LT708304">
    <property type="protein sequence ID" value="SIU01282.1"/>
    <property type="molecule type" value="Genomic_DNA"/>
</dbReference>
<dbReference type="RefSeq" id="NP_856310.1">
    <property type="nucleotide sequence ID" value="NC_002945.3"/>
</dbReference>
<dbReference type="SMR" id="P59975"/>
<dbReference type="KEGG" id="mbo:BQ2027_MB2664"/>
<dbReference type="PATRIC" id="fig|233413.5.peg.2925"/>
<dbReference type="Proteomes" id="UP000001419">
    <property type="component" value="Chromosome"/>
</dbReference>
<dbReference type="GO" id="GO:0005525">
    <property type="term" value="F:GTP binding"/>
    <property type="evidence" value="ECO:0007669"/>
    <property type="project" value="UniProtKB-KW"/>
</dbReference>
<dbReference type="GO" id="GO:0046872">
    <property type="term" value="F:metal ion binding"/>
    <property type="evidence" value="ECO:0007669"/>
    <property type="project" value="UniProtKB-KW"/>
</dbReference>
<dbReference type="GO" id="GO:0003972">
    <property type="term" value="F:RNA ligase (ATP) activity"/>
    <property type="evidence" value="ECO:0007669"/>
    <property type="project" value="TreeGrafter"/>
</dbReference>
<dbReference type="GO" id="GO:0170057">
    <property type="term" value="F:RNA ligase (GTP) activity"/>
    <property type="evidence" value="ECO:0007669"/>
    <property type="project" value="UniProtKB-EC"/>
</dbReference>
<dbReference type="GO" id="GO:0006396">
    <property type="term" value="P:RNA processing"/>
    <property type="evidence" value="ECO:0007669"/>
    <property type="project" value="InterPro"/>
</dbReference>
<dbReference type="GO" id="GO:0042245">
    <property type="term" value="P:RNA repair"/>
    <property type="evidence" value="ECO:0007669"/>
    <property type="project" value="UniProtKB-KW"/>
</dbReference>
<dbReference type="FunFam" id="3.90.1860.10:FF:000001">
    <property type="entry name" value="tRNA-splicing ligase RtcB homolog"/>
    <property type="match status" value="1"/>
</dbReference>
<dbReference type="Gene3D" id="3.90.1860.10">
    <property type="entry name" value="tRNA-splicing ligase RtcB"/>
    <property type="match status" value="1"/>
</dbReference>
<dbReference type="InterPro" id="IPR001233">
    <property type="entry name" value="RtcB"/>
</dbReference>
<dbReference type="InterPro" id="IPR036025">
    <property type="entry name" value="RtcB-like_sf"/>
</dbReference>
<dbReference type="PANTHER" id="PTHR11118">
    <property type="entry name" value="RNA-SPLICING LIGASE RTCB HOMOLOG"/>
    <property type="match status" value="1"/>
</dbReference>
<dbReference type="PANTHER" id="PTHR11118:SF1">
    <property type="entry name" value="RNA-SPLICING LIGASE RTCB HOMOLOG"/>
    <property type="match status" value="1"/>
</dbReference>
<dbReference type="Pfam" id="PF01139">
    <property type="entry name" value="RtcB"/>
    <property type="match status" value="1"/>
</dbReference>
<dbReference type="SUPFAM" id="SSF103365">
    <property type="entry name" value="Hypothetical protein PH1602"/>
    <property type="match status" value="1"/>
</dbReference>
<dbReference type="PROSITE" id="PS01288">
    <property type="entry name" value="UPF0027"/>
    <property type="match status" value="1"/>
</dbReference>
<accession>P59975</accession>
<accession>A0A1R3Y1S5</accession>
<accession>X2BLH6</accession>